<proteinExistence type="evidence at protein level"/>
<name>EX53_MYCTU</name>
<dbReference type="EC" id="3.1.11.-"/>
<dbReference type="EMBL" id="AL123456">
    <property type="protein sequence ID" value="CCP44865.1"/>
    <property type="status" value="ALT_INIT"/>
    <property type="molecule type" value="Genomic_DNA"/>
</dbReference>
<dbReference type="PIR" id="E70767">
    <property type="entry name" value="E70767"/>
</dbReference>
<dbReference type="RefSeq" id="NP_216606.1">
    <property type="nucleotide sequence ID" value="NC_000962.3"/>
</dbReference>
<dbReference type="RefSeq" id="WP_009935270.1">
    <property type="nucleotide sequence ID" value="NZ_NVQJ01000061.1"/>
</dbReference>
<dbReference type="RefSeq" id="WP_010886139.1">
    <property type="nucleotide sequence ID" value="NC_000962.3"/>
</dbReference>
<dbReference type="SMR" id="P9WNU3"/>
<dbReference type="FunCoup" id="P9WNU3">
    <property type="interactions" value="6"/>
</dbReference>
<dbReference type="STRING" id="83332.Rv2090"/>
<dbReference type="PaxDb" id="83332-Rv2090"/>
<dbReference type="DNASU" id="887924"/>
<dbReference type="GeneID" id="887924"/>
<dbReference type="KEGG" id="mtu:Rv2090"/>
<dbReference type="TubercuList" id="Rv2090"/>
<dbReference type="eggNOG" id="COG0258">
    <property type="taxonomic scope" value="Bacteria"/>
</dbReference>
<dbReference type="InParanoid" id="P9WNU3"/>
<dbReference type="OrthoDB" id="9806424at2"/>
<dbReference type="Proteomes" id="UP000001584">
    <property type="component" value="Chromosome"/>
</dbReference>
<dbReference type="GO" id="GO:0009274">
    <property type="term" value="C:peptidoglycan-based cell wall"/>
    <property type="evidence" value="ECO:0007005"/>
    <property type="project" value="MTBBASE"/>
</dbReference>
<dbReference type="GO" id="GO:0008409">
    <property type="term" value="F:5'-3' exonuclease activity"/>
    <property type="evidence" value="ECO:0007669"/>
    <property type="project" value="InterPro"/>
</dbReference>
<dbReference type="GO" id="GO:0017108">
    <property type="term" value="F:5'-flap endonuclease activity"/>
    <property type="evidence" value="ECO:0007669"/>
    <property type="project" value="InterPro"/>
</dbReference>
<dbReference type="GO" id="GO:0003677">
    <property type="term" value="F:DNA binding"/>
    <property type="evidence" value="ECO:0007669"/>
    <property type="project" value="UniProtKB-KW"/>
</dbReference>
<dbReference type="GO" id="GO:0033567">
    <property type="term" value="P:DNA replication, Okazaki fragment processing"/>
    <property type="evidence" value="ECO:0007669"/>
    <property type="project" value="InterPro"/>
</dbReference>
<dbReference type="CDD" id="cd09898">
    <property type="entry name" value="H3TH_53EXO"/>
    <property type="match status" value="1"/>
</dbReference>
<dbReference type="CDD" id="cd09859">
    <property type="entry name" value="PIN_53EXO"/>
    <property type="match status" value="1"/>
</dbReference>
<dbReference type="FunFam" id="3.40.50.1010:FF:000071">
    <property type="entry name" value="Putative 5'-3' exonuclease"/>
    <property type="match status" value="1"/>
</dbReference>
<dbReference type="Gene3D" id="1.10.150.20">
    <property type="entry name" value="5' to 3' exonuclease, C-terminal subdomain"/>
    <property type="match status" value="1"/>
</dbReference>
<dbReference type="Gene3D" id="3.40.50.1010">
    <property type="entry name" value="5'-nuclease"/>
    <property type="match status" value="1"/>
</dbReference>
<dbReference type="InterPro" id="IPR020046">
    <property type="entry name" value="5-3_exonucl_a-hlix_arch_N"/>
</dbReference>
<dbReference type="InterPro" id="IPR002421">
    <property type="entry name" value="5-3_exonuclease"/>
</dbReference>
<dbReference type="InterPro" id="IPR036279">
    <property type="entry name" value="5-3_exonuclease_C_sf"/>
</dbReference>
<dbReference type="InterPro" id="IPR020045">
    <property type="entry name" value="DNA_polI_H3TH"/>
</dbReference>
<dbReference type="InterPro" id="IPR038969">
    <property type="entry name" value="FEN"/>
</dbReference>
<dbReference type="InterPro" id="IPR008918">
    <property type="entry name" value="HhH2"/>
</dbReference>
<dbReference type="InterPro" id="IPR029060">
    <property type="entry name" value="PIN-like_dom_sf"/>
</dbReference>
<dbReference type="PANTHER" id="PTHR42646:SF2">
    <property type="entry name" value="5'-3' EXONUCLEASE FAMILY PROTEIN"/>
    <property type="match status" value="1"/>
</dbReference>
<dbReference type="PANTHER" id="PTHR42646">
    <property type="entry name" value="FLAP ENDONUCLEASE XNI"/>
    <property type="match status" value="1"/>
</dbReference>
<dbReference type="Pfam" id="PF01367">
    <property type="entry name" value="5_3_exonuc"/>
    <property type="match status" value="1"/>
</dbReference>
<dbReference type="Pfam" id="PF02739">
    <property type="entry name" value="5_3_exonuc_N"/>
    <property type="match status" value="1"/>
</dbReference>
<dbReference type="SMART" id="SM00475">
    <property type="entry name" value="53EXOc"/>
    <property type="match status" value="1"/>
</dbReference>
<dbReference type="SMART" id="SM00279">
    <property type="entry name" value="HhH2"/>
    <property type="match status" value="1"/>
</dbReference>
<dbReference type="SUPFAM" id="SSF47807">
    <property type="entry name" value="5' to 3' exonuclease, C-terminal subdomain"/>
    <property type="match status" value="1"/>
</dbReference>
<dbReference type="SUPFAM" id="SSF88723">
    <property type="entry name" value="PIN domain-like"/>
    <property type="match status" value="1"/>
</dbReference>
<reference key="1">
    <citation type="journal article" date="1998" name="Nature">
        <title>Deciphering the biology of Mycobacterium tuberculosis from the complete genome sequence.</title>
        <authorList>
            <person name="Cole S.T."/>
            <person name="Brosch R."/>
            <person name="Parkhill J."/>
            <person name="Garnier T."/>
            <person name="Churcher C.M."/>
            <person name="Harris D.E."/>
            <person name="Gordon S.V."/>
            <person name="Eiglmeier K."/>
            <person name="Gas S."/>
            <person name="Barry C.E. III"/>
            <person name="Tekaia F."/>
            <person name="Badcock K."/>
            <person name="Basham D."/>
            <person name="Brown D."/>
            <person name="Chillingworth T."/>
            <person name="Connor R."/>
            <person name="Davies R.M."/>
            <person name="Devlin K."/>
            <person name="Feltwell T."/>
            <person name="Gentles S."/>
            <person name="Hamlin N."/>
            <person name="Holroyd S."/>
            <person name="Hornsby T."/>
            <person name="Jagels K."/>
            <person name="Krogh A."/>
            <person name="McLean J."/>
            <person name="Moule S."/>
            <person name="Murphy L.D."/>
            <person name="Oliver S."/>
            <person name="Osborne J."/>
            <person name="Quail M.A."/>
            <person name="Rajandream M.A."/>
            <person name="Rogers J."/>
            <person name="Rutter S."/>
            <person name="Seeger K."/>
            <person name="Skelton S."/>
            <person name="Squares S."/>
            <person name="Squares R."/>
            <person name="Sulston J.E."/>
            <person name="Taylor K."/>
            <person name="Whitehead S."/>
            <person name="Barrell B.G."/>
        </authorList>
    </citation>
    <scope>NUCLEOTIDE SEQUENCE [LARGE SCALE GENOMIC DNA]</scope>
    <source>
        <strain>ATCC 25618 / H37Rv</strain>
    </source>
</reference>
<reference key="2">
    <citation type="journal article" date="2011" name="Mol. Cell. Proteomics">
        <title>Proteogenomic analysis of Mycobacterium tuberculosis by high resolution mass spectrometry.</title>
        <authorList>
            <person name="Kelkar D.S."/>
            <person name="Kumar D."/>
            <person name="Kumar P."/>
            <person name="Balakrishnan L."/>
            <person name="Muthusamy B."/>
            <person name="Yadav A.K."/>
            <person name="Shrivastava P."/>
            <person name="Marimuthu A."/>
            <person name="Anand S."/>
            <person name="Sundaram H."/>
            <person name="Kingsbury R."/>
            <person name="Harsha H.C."/>
            <person name="Nair B."/>
            <person name="Prasad T.S."/>
            <person name="Chauhan D.S."/>
            <person name="Katoch K."/>
            <person name="Katoch V.M."/>
            <person name="Kumar P."/>
            <person name="Chaerkady R."/>
            <person name="Ramachandran S."/>
            <person name="Dash D."/>
            <person name="Pandey A."/>
        </authorList>
    </citation>
    <scope>IDENTIFICATION BY MASS SPECTROMETRY [LARGE SCALE ANALYSIS]</scope>
    <source>
        <strain>ATCC 25618 / H37Rv</strain>
    </source>
</reference>
<comment type="function">
    <text evidence="1">5'-3' exonuclease acting preferentially on double-stranded DNA.</text>
</comment>
<comment type="sequence caution" evidence="3">
    <conflict type="erroneous initiation">
        <sequence resource="EMBL-CDS" id="CCP44865"/>
    </conflict>
    <text>Extended N-terminus.</text>
</comment>
<sequence length="318" mass="34023">MRSPLVLLDGASMWFRSFFGVPSSITAPDGRPVNAVRGFIDSMAVVITQQRPNRLAVCLDLDWRPQFRVDLIPSYKAHRVAEPEPNGQPDVEEVPDELTPQVDMIMELLDAFGIAMAGAPGFEADDVLGTLATRERRDPVIVVSGDRDLLQVVADDPVPVRVLYLGRGLAKATLFGPAEVAERYGLPAHRAGAAYAELALLRGDPSDGLPGVPGVGEKTAATLLARHGSLDQIMAAADDRKTTMAKGLRTKLLAASAYIKAADRVVRVATDAPVTLSTPTDRFPLVAADPERTAELATRFGVESSIARLQKALDTLPG</sequence>
<organism>
    <name type="scientific">Mycobacterium tuberculosis (strain ATCC 25618 / H37Rv)</name>
    <dbReference type="NCBI Taxonomy" id="83332"/>
    <lineage>
        <taxon>Bacteria</taxon>
        <taxon>Bacillati</taxon>
        <taxon>Actinomycetota</taxon>
        <taxon>Actinomycetes</taxon>
        <taxon>Mycobacteriales</taxon>
        <taxon>Mycobacteriaceae</taxon>
        <taxon>Mycobacterium</taxon>
        <taxon>Mycobacterium tuberculosis complex</taxon>
    </lineage>
</organism>
<feature type="chain" id="PRO_0000101290" description="5'-3' exonuclease">
    <location>
        <begin position="1"/>
        <end position="318"/>
    </location>
</feature>
<feature type="domain" description="5'-3' exonuclease" evidence="2">
    <location>
        <begin position="194"/>
        <end position="278"/>
    </location>
</feature>
<protein>
    <recommendedName>
        <fullName>5'-3' exonuclease</fullName>
        <ecNumber>3.1.11.-</ecNumber>
    </recommendedName>
</protein>
<keyword id="KW-0238">DNA-binding</keyword>
<keyword id="KW-0269">Exonuclease</keyword>
<keyword id="KW-0378">Hydrolase</keyword>
<keyword id="KW-0540">Nuclease</keyword>
<keyword id="KW-1185">Reference proteome</keyword>
<evidence type="ECO:0000250" key="1"/>
<evidence type="ECO:0000255" key="2"/>
<evidence type="ECO:0000305" key="3"/>
<accession>P9WNU3</accession>
<accession>L0TBC4</accession>
<accession>Q10699</accession>
<gene>
    <name type="ordered locus">Rv2090</name>
    <name type="ORF">MTCY49.30</name>
</gene>